<comment type="function">
    <text evidence="1">Produces ATP from ADP in the presence of a proton gradient across the membrane. The catalytic sites are hosted primarily by the beta subunits.</text>
</comment>
<comment type="catalytic activity">
    <reaction evidence="1">
        <text>ATP + H2O + 4 H(+)(in) = ADP + phosphate + 5 H(+)(out)</text>
        <dbReference type="Rhea" id="RHEA:57720"/>
        <dbReference type="ChEBI" id="CHEBI:15377"/>
        <dbReference type="ChEBI" id="CHEBI:15378"/>
        <dbReference type="ChEBI" id="CHEBI:30616"/>
        <dbReference type="ChEBI" id="CHEBI:43474"/>
        <dbReference type="ChEBI" id="CHEBI:456216"/>
        <dbReference type="EC" id="7.1.2.2"/>
    </reaction>
</comment>
<comment type="subunit">
    <text evidence="1">F-type ATPases have 2 components, CF(1) - the catalytic core - and CF(0) - the membrane proton channel. CF(1) has five subunits: alpha(3), beta(3), gamma(1), delta(1), epsilon(1). CF(0) has three main subunits: a(1), b(2) and c(9-12). The alpha and beta chains form an alternating ring which encloses part of the gamma chain. CF(1) is attached to CF(0) by a central stalk formed by the gamma and epsilon chains, while a peripheral stalk is formed by the delta and b chains.</text>
</comment>
<comment type="subcellular location">
    <subcellularLocation>
        <location evidence="1">Cell inner membrane</location>
        <topology evidence="1">Peripheral membrane protein</topology>
    </subcellularLocation>
</comment>
<comment type="similarity">
    <text evidence="1">Belongs to the ATPase alpha/beta chains family.</text>
</comment>
<reference key="1">
    <citation type="journal article" date="2005" name="J. Bacteriol.">
        <title>Completion of the genome sequence of Brucella abortus and comparison to the highly similar genomes of Brucella melitensis and Brucella suis.</title>
        <authorList>
            <person name="Halling S.M."/>
            <person name="Peterson-Burch B.D."/>
            <person name="Bricker B.J."/>
            <person name="Zuerner R.L."/>
            <person name="Qing Z."/>
            <person name="Li L.-L."/>
            <person name="Kapur V."/>
            <person name="Alt D.P."/>
            <person name="Olsen S.C."/>
        </authorList>
    </citation>
    <scope>NUCLEOTIDE SEQUENCE [LARGE SCALE GENOMIC DNA]</scope>
    <source>
        <strain>9-941</strain>
    </source>
</reference>
<organism>
    <name type="scientific">Brucella abortus biovar 1 (strain 9-941)</name>
    <dbReference type="NCBI Taxonomy" id="262698"/>
    <lineage>
        <taxon>Bacteria</taxon>
        <taxon>Pseudomonadati</taxon>
        <taxon>Pseudomonadota</taxon>
        <taxon>Alphaproteobacteria</taxon>
        <taxon>Hyphomicrobiales</taxon>
        <taxon>Brucellaceae</taxon>
        <taxon>Brucella/Ochrobactrum group</taxon>
        <taxon>Brucella</taxon>
    </lineage>
</organism>
<feature type="chain" id="PRO_0000254226" description="ATP synthase subunit beta">
    <location>
        <begin position="1"/>
        <end position="521"/>
    </location>
</feature>
<feature type="region of interest" description="Disordered" evidence="2">
    <location>
        <begin position="1"/>
        <end position="42"/>
    </location>
</feature>
<feature type="compositionally biased region" description="Low complexity" evidence="2">
    <location>
        <begin position="1"/>
        <end position="21"/>
    </location>
</feature>
<feature type="compositionally biased region" description="Low complexity" evidence="2">
    <location>
        <begin position="28"/>
        <end position="42"/>
    </location>
</feature>
<feature type="binding site" evidence="1">
    <location>
        <begin position="199"/>
        <end position="206"/>
    </location>
    <ligand>
        <name>ATP</name>
        <dbReference type="ChEBI" id="CHEBI:30616"/>
    </ligand>
</feature>
<sequence length="521" mass="54791">MAKAATPKTTAAAEAKPAAKAPAKKAAPKTTAAAKPAATKSGAPKAAAAGAIGHITQVIGAVVDVKFPEGQLPLILNALEVDNQGHRLVLEVAQHLGEDTVRTIAMDATEGLVRGQEARDTGEPIMVPVGVETLGRIMNVIGEPVDEAGPIKTKATRAIHQNAPEYIEQSTEAEILVTGIKVVDLLAPYAKGGKIGLFGGAGVGKTVLIMELINNVAKAHGGYSVFAGVGERTREGNDLYHEMIESGVNKLGGGEGSKAALVYGQMNEPPGARARVALSGLTVAENFRDQGQDVLFFVDNIFRFTQAGSEVSALLGRIPSAVGYQPTLATDMGAMQERITTTTKGSITSVQAIYVPADDLTDPAPATSFAHLDATTVLSRSIAEKGIYPAVDPLDSTSRMIDPKVVGEEHYAVARQVQSILQRYKALQDIIAILGMDELSEEDKLTVARARKIERFLSQPFFVAEVFTGSPGKLVDLADTIKGFKGLCAGDYDHLPEAAFYMVGSIEEALEKAKKLAAEAA</sequence>
<name>ATPB_BRUAB</name>
<proteinExistence type="inferred from homology"/>
<accession>Q57B88</accession>
<keyword id="KW-0066">ATP synthesis</keyword>
<keyword id="KW-0067">ATP-binding</keyword>
<keyword id="KW-0997">Cell inner membrane</keyword>
<keyword id="KW-1003">Cell membrane</keyword>
<keyword id="KW-0139">CF(1)</keyword>
<keyword id="KW-0375">Hydrogen ion transport</keyword>
<keyword id="KW-0406">Ion transport</keyword>
<keyword id="KW-0472">Membrane</keyword>
<keyword id="KW-0547">Nucleotide-binding</keyword>
<keyword id="KW-1278">Translocase</keyword>
<keyword id="KW-0813">Transport</keyword>
<protein>
    <recommendedName>
        <fullName evidence="1">ATP synthase subunit beta</fullName>
        <ecNumber evidence="1">7.1.2.2</ecNumber>
    </recommendedName>
    <alternativeName>
        <fullName evidence="1">ATP synthase F1 sector subunit beta</fullName>
    </alternativeName>
    <alternativeName>
        <fullName evidence="1">F-ATPase subunit beta</fullName>
    </alternativeName>
</protein>
<dbReference type="EC" id="7.1.2.2" evidence="1"/>
<dbReference type="EMBL" id="AE017223">
    <property type="protein sequence ID" value="AAX75096.1"/>
    <property type="molecule type" value="Genomic_DNA"/>
</dbReference>
<dbReference type="RefSeq" id="WP_002966968.1">
    <property type="nucleotide sequence ID" value="NC_006932.1"/>
</dbReference>
<dbReference type="SMR" id="Q57B88"/>
<dbReference type="EnsemblBacteria" id="AAX75096">
    <property type="protein sequence ID" value="AAX75096"/>
    <property type="gene ID" value="BruAb1_1779"/>
</dbReference>
<dbReference type="GeneID" id="93017861"/>
<dbReference type="KEGG" id="bmb:BruAb1_1779"/>
<dbReference type="HOGENOM" id="CLU_022398_0_2_5"/>
<dbReference type="Proteomes" id="UP000000540">
    <property type="component" value="Chromosome I"/>
</dbReference>
<dbReference type="GO" id="GO:0005886">
    <property type="term" value="C:plasma membrane"/>
    <property type="evidence" value="ECO:0007669"/>
    <property type="project" value="UniProtKB-SubCell"/>
</dbReference>
<dbReference type="GO" id="GO:0045259">
    <property type="term" value="C:proton-transporting ATP synthase complex"/>
    <property type="evidence" value="ECO:0007669"/>
    <property type="project" value="UniProtKB-KW"/>
</dbReference>
<dbReference type="GO" id="GO:0005524">
    <property type="term" value="F:ATP binding"/>
    <property type="evidence" value="ECO:0007669"/>
    <property type="project" value="UniProtKB-UniRule"/>
</dbReference>
<dbReference type="GO" id="GO:0016887">
    <property type="term" value="F:ATP hydrolysis activity"/>
    <property type="evidence" value="ECO:0007669"/>
    <property type="project" value="InterPro"/>
</dbReference>
<dbReference type="GO" id="GO:0046933">
    <property type="term" value="F:proton-transporting ATP synthase activity, rotational mechanism"/>
    <property type="evidence" value="ECO:0007669"/>
    <property type="project" value="UniProtKB-UniRule"/>
</dbReference>
<dbReference type="CDD" id="cd18110">
    <property type="entry name" value="ATP-synt_F1_beta_C"/>
    <property type="match status" value="1"/>
</dbReference>
<dbReference type="CDD" id="cd18115">
    <property type="entry name" value="ATP-synt_F1_beta_N"/>
    <property type="match status" value="1"/>
</dbReference>
<dbReference type="CDD" id="cd01133">
    <property type="entry name" value="F1-ATPase_beta_CD"/>
    <property type="match status" value="1"/>
</dbReference>
<dbReference type="FunFam" id="1.10.1140.10:FF:000001">
    <property type="entry name" value="ATP synthase subunit beta"/>
    <property type="match status" value="1"/>
</dbReference>
<dbReference type="FunFam" id="2.40.10.170:FF:000005">
    <property type="entry name" value="ATP synthase subunit beta"/>
    <property type="match status" value="1"/>
</dbReference>
<dbReference type="FunFam" id="3.40.50.300:FF:000026">
    <property type="entry name" value="ATP synthase subunit beta"/>
    <property type="match status" value="1"/>
</dbReference>
<dbReference type="Gene3D" id="2.40.10.170">
    <property type="match status" value="1"/>
</dbReference>
<dbReference type="Gene3D" id="1.10.1140.10">
    <property type="entry name" value="Bovine Mitochondrial F1-atpase, Atp Synthase Beta Chain, Chain D, domain 3"/>
    <property type="match status" value="1"/>
</dbReference>
<dbReference type="Gene3D" id="3.40.50.300">
    <property type="entry name" value="P-loop containing nucleotide triphosphate hydrolases"/>
    <property type="match status" value="1"/>
</dbReference>
<dbReference type="HAMAP" id="MF_01347">
    <property type="entry name" value="ATP_synth_beta_bact"/>
    <property type="match status" value="1"/>
</dbReference>
<dbReference type="InterPro" id="IPR003593">
    <property type="entry name" value="AAA+_ATPase"/>
</dbReference>
<dbReference type="InterPro" id="IPR055190">
    <property type="entry name" value="ATP-synt_VA_C"/>
</dbReference>
<dbReference type="InterPro" id="IPR005722">
    <property type="entry name" value="ATP_synth_F1_bsu"/>
</dbReference>
<dbReference type="InterPro" id="IPR020003">
    <property type="entry name" value="ATPase_a/bsu_AS"/>
</dbReference>
<dbReference type="InterPro" id="IPR050053">
    <property type="entry name" value="ATPase_alpha/beta_chains"/>
</dbReference>
<dbReference type="InterPro" id="IPR004100">
    <property type="entry name" value="ATPase_F1/V1/A1_a/bsu_N"/>
</dbReference>
<dbReference type="InterPro" id="IPR036121">
    <property type="entry name" value="ATPase_F1/V1/A1_a/bsu_N_sf"/>
</dbReference>
<dbReference type="InterPro" id="IPR000194">
    <property type="entry name" value="ATPase_F1/V1/A1_a/bsu_nucl-bd"/>
</dbReference>
<dbReference type="InterPro" id="IPR024034">
    <property type="entry name" value="ATPase_F1/V1_b/a_C"/>
</dbReference>
<dbReference type="InterPro" id="IPR027417">
    <property type="entry name" value="P-loop_NTPase"/>
</dbReference>
<dbReference type="NCBIfam" id="TIGR01039">
    <property type="entry name" value="atpD"/>
    <property type="match status" value="1"/>
</dbReference>
<dbReference type="PANTHER" id="PTHR15184">
    <property type="entry name" value="ATP SYNTHASE"/>
    <property type="match status" value="1"/>
</dbReference>
<dbReference type="PANTHER" id="PTHR15184:SF71">
    <property type="entry name" value="ATP SYNTHASE SUBUNIT BETA, MITOCHONDRIAL"/>
    <property type="match status" value="1"/>
</dbReference>
<dbReference type="Pfam" id="PF00006">
    <property type="entry name" value="ATP-synt_ab"/>
    <property type="match status" value="1"/>
</dbReference>
<dbReference type="Pfam" id="PF02874">
    <property type="entry name" value="ATP-synt_ab_N"/>
    <property type="match status" value="1"/>
</dbReference>
<dbReference type="Pfam" id="PF22919">
    <property type="entry name" value="ATP-synt_VA_C"/>
    <property type="match status" value="1"/>
</dbReference>
<dbReference type="PIRSF" id="PIRSF039072">
    <property type="entry name" value="ATPase_subunit_beta"/>
    <property type="match status" value="1"/>
</dbReference>
<dbReference type="SMART" id="SM00382">
    <property type="entry name" value="AAA"/>
    <property type="match status" value="1"/>
</dbReference>
<dbReference type="SUPFAM" id="SSF47917">
    <property type="entry name" value="C-terminal domain of alpha and beta subunits of F1 ATP synthase"/>
    <property type="match status" value="1"/>
</dbReference>
<dbReference type="SUPFAM" id="SSF50615">
    <property type="entry name" value="N-terminal domain of alpha and beta subunits of F1 ATP synthase"/>
    <property type="match status" value="1"/>
</dbReference>
<dbReference type="SUPFAM" id="SSF52540">
    <property type="entry name" value="P-loop containing nucleoside triphosphate hydrolases"/>
    <property type="match status" value="1"/>
</dbReference>
<dbReference type="PROSITE" id="PS00152">
    <property type="entry name" value="ATPASE_ALPHA_BETA"/>
    <property type="match status" value="1"/>
</dbReference>
<gene>
    <name evidence="1" type="primary">atpD</name>
    <name type="ordered locus">BruAb1_1779</name>
</gene>
<evidence type="ECO:0000255" key="1">
    <source>
        <dbReference type="HAMAP-Rule" id="MF_01347"/>
    </source>
</evidence>
<evidence type="ECO:0000256" key="2">
    <source>
        <dbReference type="SAM" id="MobiDB-lite"/>
    </source>
</evidence>